<name>MANA_ASPOR</name>
<accession>Q2TXJ2</accession>
<sequence length="386" mass="41906">MKLNPSLLTAAGLVSAQLASALPQASSSTVSPSPSPSATPGSFVTTSGLNFVIDGKTGYFAGSNSYWIGFQKNNDDVDLVFSHLQESGLKILRVWGFNDVNQKPTDGSVYYHLLADGTATVNEGEDGLQRLDYVVSSAEKHGIKLIINFVNFWDDYGGINAYVKAFGGSKEGFYTNDAMQAAYRAYIKAVISRYSDSTAIFAWELANEPRCQGCETTVLYNWIESTSQYIKSLDSKHLVCIGDEGFGLDTGSDGSYPYQYSEGSDFAKNLAIPTIDFGTFHLYPSSWGTTNDWGNGWVTSHGAACKAAGKPCLFEEYGVTSDHCAVEKPWQNTALNTTAISGDLYWQYGDQLSGGPSPDDGNTFYYGTDDFKCLVTDHIAAINSRK</sequence>
<proteinExistence type="inferred from homology"/>
<gene>
    <name type="primary">manA</name>
    <name type="synonym">man1</name>
    <name type="ORF">AO090010000122</name>
</gene>
<reference key="1">
    <citation type="journal article" date="2005" name="Nature">
        <title>Genome sequencing and analysis of Aspergillus oryzae.</title>
        <authorList>
            <person name="Machida M."/>
            <person name="Asai K."/>
            <person name="Sano M."/>
            <person name="Tanaka T."/>
            <person name="Kumagai T."/>
            <person name="Terai G."/>
            <person name="Kusumoto K."/>
            <person name="Arima T."/>
            <person name="Akita O."/>
            <person name="Kashiwagi Y."/>
            <person name="Abe K."/>
            <person name="Gomi K."/>
            <person name="Horiuchi H."/>
            <person name="Kitamoto K."/>
            <person name="Kobayashi T."/>
            <person name="Takeuchi M."/>
            <person name="Denning D.W."/>
            <person name="Galagan J.E."/>
            <person name="Nierman W.C."/>
            <person name="Yu J."/>
            <person name="Archer D.B."/>
            <person name="Bennett J.W."/>
            <person name="Bhatnagar D."/>
            <person name="Cleveland T.E."/>
            <person name="Fedorova N.D."/>
            <person name="Gotoh O."/>
            <person name="Horikawa H."/>
            <person name="Hosoyama A."/>
            <person name="Ichinomiya M."/>
            <person name="Igarashi R."/>
            <person name="Iwashita K."/>
            <person name="Juvvadi P.R."/>
            <person name="Kato M."/>
            <person name="Kato Y."/>
            <person name="Kin T."/>
            <person name="Kokubun A."/>
            <person name="Maeda H."/>
            <person name="Maeyama N."/>
            <person name="Maruyama J."/>
            <person name="Nagasaki H."/>
            <person name="Nakajima T."/>
            <person name="Oda K."/>
            <person name="Okada K."/>
            <person name="Paulsen I."/>
            <person name="Sakamoto K."/>
            <person name="Sawano T."/>
            <person name="Takahashi M."/>
            <person name="Takase K."/>
            <person name="Terabayashi Y."/>
            <person name="Wortman J.R."/>
            <person name="Yamada O."/>
            <person name="Yamagata Y."/>
            <person name="Anazawa H."/>
            <person name="Hata Y."/>
            <person name="Koide Y."/>
            <person name="Komori T."/>
            <person name="Koyama Y."/>
            <person name="Minetoki T."/>
            <person name="Suharnan S."/>
            <person name="Tanaka A."/>
            <person name="Isono K."/>
            <person name="Kuhara S."/>
            <person name="Ogasawara N."/>
            <person name="Kikuchi H."/>
        </authorList>
    </citation>
    <scope>NUCLEOTIDE SEQUENCE [LARGE SCALE GENOMIC DNA]</scope>
    <source>
        <strain>ATCC 42149 / RIB 40</strain>
    </source>
</reference>
<feature type="signal peptide" evidence="4">
    <location>
        <begin position="1"/>
        <end position="21"/>
    </location>
</feature>
<feature type="chain" id="PRO_0000393705" description="Probable mannan endo-1,4-beta-mannosidase A">
    <location>
        <begin position="22"/>
        <end position="386"/>
    </location>
</feature>
<feature type="active site" description="Proton donor" evidence="3">
    <location>
        <position position="208"/>
    </location>
</feature>
<feature type="active site" description="Nucleophile" evidence="3">
    <location>
        <position position="316"/>
    </location>
</feature>
<feature type="binding site" evidence="2">
    <location>
        <position position="95"/>
    </location>
    <ligand>
        <name>substrate</name>
    </ligand>
</feature>
<feature type="binding site" evidence="2">
    <location>
        <position position="207"/>
    </location>
    <ligand>
        <name>substrate</name>
    </ligand>
</feature>
<feature type="binding site" evidence="2">
    <location>
        <position position="283"/>
    </location>
    <ligand>
        <name>substrate</name>
    </ligand>
</feature>
<feature type="binding site" evidence="2">
    <location>
        <position position="346"/>
    </location>
    <ligand>
        <name>substrate</name>
    </ligand>
</feature>
<feature type="glycosylation site" description="N-linked (GlcNAc...) asparagine" evidence="4">
    <location>
        <position position="336"/>
    </location>
</feature>
<organism>
    <name type="scientific">Aspergillus oryzae (strain ATCC 42149 / RIB 40)</name>
    <name type="common">Yellow koji mold</name>
    <dbReference type="NCBI Taxonomy" id="510516"/>
    <lineage>
        <taxon>Eukaryota</taxon>
        <taxon>Fungi</taxon>
        <taxon>Dikarya</taxon>
        <taxon>Ascomycota</taxon>
        <taxon>Pezizomycotina</taxon>
        <taxon>Eurotiomycetes</taxon>
        <taxon>Eurotiomycetidae</taxon>
        <taxon>Eurotiales</taxon>
        <taxon>Aspergillaceae</taxon>
        <taxon>Aspergillus</taxon>
        <taxon>Aspergillus subgen. Circumdati</taxon>
    </lineage>
</organism>
<comment type="function">
    <text evidence="1">Endo-1,4-mannanase, a crucial enzyme for depolymerization of seed galactomannans and wood galactoglucomannans.</text>
</comment>
<comment type="catalytic activity">
    <reaction>
        <text>Random hydrolysis of (1-&gt;4)-beta-D-mannosidic linkages in mannans, galactomannans and glucomannans.</text>
        <dbReference type="EC" id="3.2.1.78"/>
    </reaction>
</comment>
<comment type="subcellular location">
    <subcellularLocation>
        <location evidence="1">Secreted</location>
    </subcellularLocation>
</comment>
<comment type="similarity">
    <text evidence="5">Belongs to the glycosyl hydrolase 5 (cellulase A) family.</text>
</comment>
<dbReference type="EC" id="3.2.1.78"/>
<dbReference type="EMBL" id="BA000056">
    <property type="protein sequence ID" value="BAE66031.1"/>
    <property type="molecule type" value="Genomic_DNA"/>
</dbReference>
<dbReference type="SMR" id="Q2TXJ2"/>
<dbReference type="STRING" id="510516.Q2TXJ2"/>
<dbReference type="CAZy" id="GH5">
    <property type="family name" value="Glycoside Hydrolase Family 5"/>
</dbReference>
<dbReference type="GlyCosmos" id="Q2TXJ2">
    <property type="glycosylation" value="1 site, No reported glycans"/>
</dbReference>
<dbReference type="EnsemblFungi" id="BAE66031">
    <property type="protein sequence ID" value="BAE66031"/>
    <property type="gene ID" value="AO090010000122"/>
</dbReference>
<dbReference type="HOGENOM" id="CLU_031603_4_1_1"/>
<dbReference type="Proteomes" id="UP000006564">
    <property type="component" value="Chromosome 8"/>
</dbReference>
<dbReference type="GO" id="GO:0005576">
    <property type="term" value="C:extracellular region"/>
    <property type="evidence" value="ECO:0007669"/>
    <property type="project" value="UniProtKB-SubCell"/>
</dbReference>
<dbReference type="GO" id="GO:0016985">
    <property type="term" value="F:mannan endo-1,4-beta-mannosidase activity"/>
    <property type="evidence" value="ECO:0007669"/>
    <property type="project" value="UniProtKB-EC"/>
</dbReference>
<dbReference type="GO" id="GO:0046355">
    <property type="term" value="P:mannan catabolic process"/>
    <property type="evidence" value="ECO:0007669"/>
    <property type="project" value="UniProtKB-ARBA"/>
</dbReference>
<dbReference type="FunFam" id="3.20.20.80:FF:000076">
    <property type="entry name" value="Mannan endo-1,4-beta-mannosidase A"/>
    <property type="match status" value="1"/>
</dbReference>
<dbReference type="Gene3D" id="3.20.20.80">
    <property type="entry name" value="Glycosidases"/>
    <property type="match status" value="1"/>
</dbReference>
<dbReference type="InterPro" id="IPR001547">
    <property type="entry name" value="Glyco_hydro_5"/>
</dbReference>
<dbReference type="InterPro" id="IPR017853">
    <property type="entry name" value="Glycoside_hydrolase_SF"/>
</dbReference>
<dbReference type="InterPro" id="IPR045053">
    <property type="entry name" value="MAN-like"/>
</dbReference>
<dbReference type="PANTHER" id="PTHR31451">
    <property type="match status" value="1"/>
</dbReference>
<dbReference type="PANTHER" id="PTHR31451:SF39">
    <property type="entry name" value="MANNAN ENDO-1,4-BETA-MANNOSIDASE 1"/>
    <property type="match status" value="1"/>
</dbReference>
<dbReference type="Pfam" id="PF00150">
    <property type="entry name" value="Cellulase"/>
    <property type="match status" value="1"/>
</dbReference>
<dbReference type="SUPFAM" id="SSF51445">
    <property type="entry name" value="(Trans)glycosidases"/>
    <property type="match status" value="1"/>
</dbReference>
<protein>
    <recommendedName>
        <fullName>Probable mannan endo-1,4-beta-mannosidase A</fullName>
        <ecNumber>3.2.1.78</ecNumber>
    </recommendedName>
    <alternativeName>
        <fullName>Endo-beta-1,4-mannanase A</fullName>
    </alternativeName>
</protein>
<keyword id="KW-0119">Carbohydrate metabolism</keyword>
<keyword id="KW-0325">Glycoprotein</keyword>
<keyword id="KW-0326">Glycosidase</keyword>
<keyword id="KW-0378">Hydrolase</keyword>
<keyword id="KW-1185">Reference proteome</keyword>
<keyword id="KW-0964">Secreted</keyword>
<keyword id="KW-0732">Signal</keyword>
<evidence type="ECO:0000250" key="1"/>
<evidence type="ECO:0000250" key="2">
    <source>
        <dbReference type="UniProtKB" id="B4XC07"/>
    </source>
</evidence>
<evidence type="ECO:0000250" key="3">
    <source>
        <dbReference type="UniProtKB" id="Q99036"/>
    </source>
</evidence>
<evidence type="ECO:0000255" key="4"/>
<evidence type="ECO:0000305" key="5"/>